<organism>
    <name type="scientific">Arabidopsis thaliana</name>
    <name type="common">Mouse-ear cress</name>
    <dbReference type="NCBI Taxonomy" id="3702"/>
    <lineage>
        <taxon>Eukaryota</taxon>
        <taxon>Viridiplantae</taxon>
        <taxon>Streptophyta</taxon>
        <taxon>Embryophyta</taxon>
        <taxon>Tracheophyta</taxon>
        <taxon>Spermatophyta</taxon>
        <taxon>Magnoliopsida</taxon>
        <taxon>eudicotyledons</taxon>
        <taxon>Gunneridae</taxon>
        <taxon>Pentapetalae</taxon>
        <taxon>rosids</taxon>
        <taxon>malvids</taxon>
        <taxon>Brassicales</taxon>
        <taxon>Brassicaceae</taxon>
        <taxon>Camelineae</taxon>
        <taxon>Arabidopsis</taxon>
    </lineage>
</organism>
<name>ARI2_ARATH</name>
<gene>
    <name type="primary">ARI2</name>
    <name type="ordered locus">At2g16090</name>
    <name type="ORF">F7H1.11</name>
</gene>
<feature type="chain" id="PRO_0000356195" description="Probable E3 ubiquitin-protein ligase ARI2">
    <location>
        <begin position="1"/>
        <end position="593"/>
    </location>
</feature>
<feature type="zinc finger region" description="RING-type 1" evidence="3">
    <location>
        <begin position="124"/>
        <end position="173"/>
    </location>
</feature>
<feature type="zinc finger region" description="IBR-type" evidence="3">
    <location>
        <begin position="195"/>
        <end position="257"/>
    </location>
</feature>
<feature type="zinc finger region" description="RING-type 2; atypical" evidence="3">
    <location>
        <begin position="284"/>
        <end position="312"/>
    </location>
</feature>
<feature type="region of interest" description="TRIAD supradomain" evidence="3">
    <location>
        <begin position="120"/>
        <end position="334"/>
    </location>
</feature>
<feature type="active site" evidence="3">
    <location>
        <position position="297"/>
    </location>
</feature>
<feature type="binding site" evidence="3">
    <location>
        <position position="124"/>
    </location>
    <ligand>
        <name>Zn(2+)</name>
        <dbReference type="ChEBI" id="CHEBI:29105"/>
        <label>1</label>
    </ligand>
</feature>
<feature type="binding site" evidence="3">
    <location>
        <position position="127"/>
    </location>
    <ligand>
        <name>Zn(2+)</name>
        <dbReference type="ChEBI" id="CHEBI:29105"/>
        <label>1</label>
    </ligand>
</feature>
<feature type="binding site" evidence="3">
    <location>
        <position position="141"/>
    </location>
    <ligand>
        <name>Zn(2+)</name>
        <dbReference type="ChEBI" id="CHEBI:29105"/>
        <label>2</label>
    </ligand>
</feature>
<feature type="binding site" evidence="3">
    <location>
        <position position="143"/>
    </location>
    <ligand>
        <name>Zn(2+)</name>
        <dbReference type="ChEBI" id="CHEBI:29105"/>
        <label>2</label>
    </ligand>
</feature>
<feature type="binding site" evidence="3">
    <location>
        <position position="146"/>
    </location>
    <ligand>
        <name>Zn(2+)</name>
        <dbReference type="ChEBI" id="CHEBI:29105"/>
        <label>1</label>
    </ligand>
</feature>
<feature type="binding site" evidence="3">
    <location>
        <position position="149"/>
    </location>
    <ligand>
        <name>Zn(2+)</name>
        <dbReference type="ChEBI" id="CHEBI:29105"/>
        <label>1</label>
    </ligand>
</feature>
<feature type="binding site" evidence="3">
    <location>
        <position position="168"/>
    </location>
    <ligand>
        <name>Zn(2+)</name>
        <dbReference type="ChEBI" id="CHEBI:29105"/>
        <label>2</label>
    </ligand>
</feature>
<feature type="binding site" evidence="3">
    <location>
        <position position="173"/>
    </location>
    <ligand>
        <name>Zn(2+)</name>
        <dbReference type="ChEBI" id="CHEBI:29105"/>
        <label>2</label>
    </ligand>
</feature>
<feature type="binding site" evidence="3">
    <location>
        <position position="215"/>
    </location>
    <ligand>
        <name>Zn(2+)</name>
        <dbReference type="ChEBI" id="CHEBI:29105"/>
        <label>3</label>
    </ligand>
</feature>
<feature type="binding site" evidence="3">
    <location>
        <position position="221"/>
    </location>
    <ligand>
        <name>Zn(2+)</name>
        <dbReference type="ChEBI" id="CHEBI:29105"/>
        <label>3</label>
    </ligand>
</feature>
<feature type="binding site" evidence="3">
    <location>
        <position position="237"/>
    </location>
    <ligand>
        <name>Zn(2+)</name>
        <dbReference type="ChEBI" id="CHEBI:29105"/>
        <label>3</label>
    </ligand>
</feature>
<feature type="binding site" evidence="3">
    <location>
        <position position="239"/>
    </location>
    <ligand>
        <name>Zn(2+)</name>
        <dbReference type="ChEBI" id="CHEBI:29105"/>
        <label>3</label>
    </ligand>
</feature>
<feature type="binding site" evidence="3">
    <location>
        <position position="244"/>
    </location>
    <ligand>
        <name>Zn(2+)</name>
        <dbReference type="ChEBI" id="CHEBI:29105"/>
        <label>4</label>
    </ligand>
</feature>
<feature type="binding site" evidence="3">
    <location>
        <position position="247"/>
    </location>
    <ligand>
        <name>Zn(2+)</name>
        <dbReference type="ChEBI" id="CHEBI:29105"/>
        <label>4</label>
    </ligand>
</feature>
<feature type="binding site" evidence="3">
    <location>
        <position position="252"/>
    </location>
    <ligand>
        <name>Zn(2+)</name>
        <dbReference type="ChEBI" id="CHEBI:29105"/>
        <label>4</label>
    </ligand>
</feature>
<feature type="binding site" evidence="3">
    <location>
        <position position="257"/>
    </location>
    <ligand>
        <name>Zn(2+)</name>
        <dbReference type="ChEBI" id="CHEBI:29105"/>
        <label>4</label>
    </ligand>
</feature>
<feature type="binding site" evidence="3">
    <location>
        <position position="284"/>
    </location>
    <ligand>
        <name>Zn(2+)</name>
        <dbReference type="ChEBI" id="CHEBI:29105"/>
        <label>5</label>
    </ligand>
</feature>
<feature type="binding site" evidence="3">
    <location>
        <position position="287"/>
    </location>
    <ligand>
        <name>Zn(2+)</name>
        <dbReference type="ChEBI" id="CHEBI:29105"/>
        <label>5</label>
    </ligand>
</feature>
<feature type="binding site" evidence="3">
    <location>
        <position position="302"/>
    </location>
    <ligand>
        <name>Zn(2+)</name>
        <dbReference type="ChEBI" id="CHEBI:29105"/>
        <label>5</label>
    </ligand>
</feature>
<feature type="binding site" evidence="3">
    <location>
        <position position="304"/>
    </location>
    <ligand>
        <name>Zn(2+)</name>
        <dbReference type="ChEBI" id="CHEBI:29105"/>
        <label>5</label>
    </ligand>
</feature>
<feature type="binding site" evidence="3">
    <location>
        <position position="309"/>
    </location>
    <ligand>
        <name>Zn(2+)</name>
        <dbReference type="ChEBI" id="CHEBI:29105"/>
        <label>6</label>
    </ligand>
</feature>
<feature type="binding site" evidence="3">
    <location>
        <position position="312"/>
    </location>
    <ligand>
        <name>Zn(2+)</name>
        <dbReference type="ChEBI" id="CHEBI:29105"/>
        <label>6</label>
    </ligand>
</feature>
<feature type="binding site" evidence="3">
    <location>
        <position position="320"/>
    </location>
    <ligand>
        <name>Zn(2+)</name>
        <dbReference type="ChEBI" id="CHEBI:29105"/>
        <label>6</label>
    </ligand>
</feature>
<feature type="binding site" evidence="3">
    <location>
        <position position="330"/>
    </location>
    <ligand>
        <name>Zn(2+)</name>
        <dbReference type="ChEBI" id="CHEBI:29105"/>
        <label>6</label>
    </ligand>
</feature>
<feature type="sequence conflict" description="In Ref. 4; AAM26640/AAL57664." evidence="6" ref="4">
    <original>Q</original>
    <variation>K</variation>
    <location>
        <position position="537"/>
    </location>
</feature>
<sequence>MDDNLSGEEEDYYYSSDQESLNGIDNDESVSIPVSSRSNTVKVITKESLLAAQREDLRRVMELLSVKEHHARTLLIHYRWDVEKLFAVLVEKGKDSLFSGAGVTLLENQSCDSSVSGSSSMMSCDICVEDVPGYQLTRMDCGHSFCNNCWTGHFTVKINEGQSKRIICMAHKCNAICDEDVVRALVSKSQPDLAEKFDRFLLESYIEDNKMVKWCPSTPHCGNAIRVEDDELCEVECSCGLQFCFSCSSQAHSPCSCVMWELWRKKCFDESETVNWITVHTKPCPKCHKPVEKNGGCNLVTCLCRQSFCWLCGEATGRDHTWARISGHSCGRFQEDKEKQMERAKRDLKRYMHYHNRYKAHIDSSKLEAKLSNNISKKVSISEKRELQLKDFSWATNGLHRLFRSRRVLSYSYPFAFYMFGDELFKDEMSSEEREIKQNLFEDQQQQLEANVEKLSKFLEEPFDQFADDKVMQIRIQVINLSVAVDTLCENMYECIENDLLGSLQLGIHNITPYRSNGIERASDFYSSQNSKEAVGQSSDCGWTSRLDQALESGKSEDTSCSSGKRARIDESYRNSQTTLLDLNLPAEAIERK</sequence>
<proteinExistence type="evidence at transcript level"/>
<reference key="1">
    <citation type="journal article" date="2003" name="Plant Physiol.">
        <title>Identification and characterization of the ARIADNE gene family in Arabidopsis. A group of putative E3 ligases.</title>
        <authorList>
            <person name="Mladek C."/>
            <person name="Guger K."/>
            <person name="Hauser M.-T."/>
        </authorList>
    </citation>
    <scope>NUCLEOTIDE SEQUENCE [GENOMIC DNA]</scope>
    <scope>TISSUE SPECIFICITY</scope>
    <scope>NOMENCLATURE</scope>
    <scope>GENE FAMILY</scope>
    <source>
        <strain>cv. Columbia</strain>
    </source>
</reference>
<reference key="2">
    <citation type="journal article" date="1999" name="Nature">
        <title>Sequence and analysis of chromosome 2 of the plant Arabidopsis thaliana.</title>
        <authorList>
            <person name="Lin X."/>
            <person name="Kaul S."/>
            <person name="Rounsley S.D."/>
            <person name="Shea T.P."/>
            <person name="Benito M.-I."/>
            <person name="Town C.D."/>
            <person name="Fujii C.Y."/>
            <person name="Mason T.M."/>
            <person name="Bowman C.L."/>
            <person name="Barnstead M.E."/>
            <person name="Feldblyum T.V."/>
            <person name="Buell C.R."/>
            <person name="Ketchum K.A."/>
            <person name="Lee J.J."/>
            <person name="Ronning C.M."/>
            <person name="Koo H.L."/>
            <person name="Moffat K.S."/>
            <person name="Cronin L.A."/>
            <person name="Shen M."/>
            <person name="Pai G."/>
            <person name="Van Aken S."/>
            <person name="Umayam L."/>
            <person name="Tallon L.J."/>
            <person name="Gill J.E."/>
            <person name="Adams M.D."/>
            <person name="Carrera A.J."/>
            <person name="Creasy T.H."/>
            <person name="Goodman H.M."/>
            <person name="Somerville C.R."/>
            <person name="Copenhaver G.P."/>
            <person name="Preuss D."/>
            <person name="Nierman W.C."/>
            <person name="White O."/>
            <person name="Eisen J.A."/>
            <person name="Salzberg S.L."/>
            <person name="Fraser C.M."/>
            <person name="Venter J.C."/>
        </authorList>
    </citation>
    <scope>NUCLEOTIDE SEQUENCE [LARGE SCALE GENOMIC DNA]</scope>
    <source>
        <strain>cv. Columbia</strain>
    </source>
</reference>
<reference key="3">
    <citation type="journal article" date="2017" name="Plant J.">
        <title>Araport11: a complete reannotation of the Arabidopsis thaliana reference genome.</title>
        <authorList>
            <person name="Cheng C.Y."/>
            <person name="Krishnakumar V."/>
            <person name="Chan A.P."/>
            <person name="Thibaud-Nissen F."/>
            <person name="Schobel S."/>
            <person name="Town C.D."/>
        </authorList>
    </citation>
    <scope>GENOME REANNOTATION</scope>
    <source>
        <strain>cv. Columbia</strain>
    </source>
</reference>
<reference key="4">
    <citation type="journal article" date="2003" name="Science">
        <title>Empirical analysis of transcriptional activity in the Arabidopsis genome.</title>
        <authorList>
            <person name="Yamada K."/>
            <person name="Lim J."/>
            <person name="Dale J.M."/>
            <person name="Chen H."/>
            <person name="Shinn P."/>
            <person name="Palm C.J."/>
            <person name="Southwick A.M."/>
            <person name="Wu H.C."/>
            <person name="Kim C.J."/>
            <person name="Nguyen M."/>
            <person name="Pham P.K."/>
            <person name="Cheuk R.F."/>
            <person name="Karlin-Newmann G."/>
            <person name="Liu S.X."/>
            <person name="Lam B."/>
            <person name="Sakano H."/>
            <person name="Wu T."/>
            <person name="Yu G."/>
            <person name="Miranda M."/>
            <person name="Quach H.L."/>
            <person name="Tripp M."/>
            <person name="Chang C.H."/>
            <person name="Lee J.M."/>
            <person name="Toriumi M.J."/>
            <person name="Chan M.M."/>
            <person name="Tang C.C."/>
            <person name="Onodera C.S."/>
            <person name="Deng J.M."/>
            <person name="Akiyama K."/>
            <person name="Ansari Y."/>
            <person name="Arakawa T."/>
            <person name="Banh J."/>
            <person name="Banno F."/>
            <person name="Bowser L."/>
            <person name="Brooks S.Y."/>
            <person name="Carninci P."/>
            <person name="Chao Q."/>
            <person name="Choy N."/>
            <person name="Enju A."/>
            <person name="Goldsmith A.D."/>
            <person name="Gurjal M."/>
            <person name="Hansen N.F."/>
            <person name="Hayashizaki Y."/>
            <person name="Johnson-Hopson C."/>
            <person name="Hsuan V.W."/>
            <person name="Iida K."/>
            <person name="Karnes M."/>
            <person name="Khan S."/>
            <person name="Koesema E."/>
            <person name="Ishida J."/>
            <person name="Jiang P.X."/>
            <person name="Jones T."/>
            <person name="Kawai J."/>
            <person name="Kamiya A."/>
            <person name="Meyers C."/>
            <person name="Nakajima M."/>
            <person name="Narusaka M."/>
            <person name="Seki M."/>
            <person name="Sakurai T."/>
            <person name="Satou M."/>
            <person name="Tamse R."/>
            <person name="Vaysberg M."/>
            <person name="Wallender E.K."/>
            <person name="Wong C."/>
            <person name="Yamamura Y."/>
            <person name="Yuan S."/>
            <person name="Shinozaki K."/>
            <person name="Davis R.W."/>
            <person name="Theologis A."/>
            <person name="Ecker J.R."/>
        </authorList>
    </citation>
    <scope>NUCLEOTIDE SEQUENCE [LARGE SCALE MRNA]</scope>
    <source>
        <strain>cv. Columbia</strain>
    </source>
</reference>
<reference key="5">
    <citation type="journal article" date="2002" name="Mol. Biol. Evol.">
        <title>Comparative genomics of the RBR family, including the Parkinson's disease-related gene parkin and the genes of the ariadne subfamily.</title>
        <authorList>
            <person name="Marin I."/>
            <person name="Ferrus A."/>
        </authorList>
    </citation>
    <scope>FUNCTION</scope>
</reference>
<protein>
    <recommendedName>
        <fullName>Probable E3 ubiquitin-protein ligase ARI2</fullName>
        <ecNumber evidence="2">2.3.2.31</ecNumber>
    </recommendedName>
    <alternativeName>
        <fullName>ARIADNE-like protein ARI2</fullName>
    </alternativeName>
    <alternativeName>
        <fullName>Protein ariadne homolog 2</fullName>
    </alternativeName>
    <alternativeName>
        <fullName evidence="6">RING-type E3 ubiquitin transferase ARI2</fullName>
    </alternativeName>
</protein>
<evidence type="ECO:0000250" key="1"/>
<evidence type="ECO:0000250" key="2">
    <source>
        <dbReference type="UniProtKB" id="Q9Y4X5"/>
    </source>
</evidence>
<evidence type="ECO:0000255" key="3">
    <source>
        <dbReference type="PROSITE-ProRule" id="PRU01221"/>
    </source>
</evidence>
<evidence type="ECO:0000269" key="4">
    <source>
    </source>
</evidence>
<evidence type="ECO:0000269" key="5">
    <source>
    </source>
</evidence>
<evidence type="ECO:0000305" key="6"/>
<dbReference type="EC" id="2.3.2.31" evidence="2"/>
<dbReference type="EMBL" id="AJ510205">
    <property type="protein sequence ID" value="CAD52884.1"/>
    <property type="molecule type" value="Genomic_DNA"/>
</dbReference>
<dbReference type="EMBL" id="AC007134">
    <property type="protein sequence ID" value="AAD26951.1"/>
    <property type="status" value="ALT_SEQ"/>
    <property type="molecule type" value="Genomic_DNA"/>
</dbReference>
<dbReference type="EMBL" id="CP002685">
    <property type="protein sequence ID" value="AEC06466.1"/>
    <property type="molecule type" value="Genomic_DNA"/>
</dbReference>
<dbReference type="EMBL" id="AY065022">
    <property type="protein sequence ID" value="AAL57664.1"/>
    <property type="molecule type" value="mRNA"/>
</dbReference>
<dbReference type="EMBL" id="AY101519">
    <property type="protein sequence ID" value="AAM26640.1"/>
    <property type="molecule type" value="mRNA"/>
</dbReference>
<dbReference type="PIR" id="E84536">
    <property type="entry name" value="E84536"/>
</dbReference>
<dbReference type="RefSeq" id="NP_179206.2">
    <property type="nucleotide sequence ID" value="NM_127167.4"/>
</dbReference>
<dbReference type="SMR" id="Q84RR2"/>
<dbReference type="FunCoup" id="Q84RR2">
    <property type="interactions" value="4136"/>
</dbReference>
<dbReference type="STRING" id="3702.Q84RR2"/>
<dbReference type="PaxDb" id="3702-AT2G16090.1"/>
<dbReference type="ProteomicsDB" id="241060"/>
<dbReference type="EnsemblPlants" id="AT2G16090.1">
    <property type="protein sequence ID" value="AT2G16090.1"/>
    <property type="gene ID" value="AT2G16090"/>
</dbReference>
<dbReference type="GeneID" id="816106"/>
<dbReference type="Gramene" id="AT2G16090.1">
    <property type="protein sequence ID" value="AT2G16090.1"/>
    <property type="gene ID" value="AT2G16090"/>
</dbReference>
<dbReference type="KEGG" id="ath:AT2G16090"/>
<dbReference type="Araport" id="AT2G16090"/>
<dbReference type="TAIR" id="AT2G16090">
    <property type="gene designation" value="ARI2"/>
</dbReference>
<dbReference type="eggNOG" id="KOG1815">
    <property type="taxonomic scope" value="Eukaryota"/>
</dbReference>
<dbReference type="HOGENOM" id="CLU_009823_2_0_1"/>
<dbReference type="InParanoid" id="Q84RR2"/>
<dbReference type="OrthoDB" id="10009520at2759"/>
<dbReference type="PhylomeDB" id="Q84RR2"/>
<dbReference type="UniPathway" id="UPA00143"/>
<dbReference type="PRO" id="PR:Q84RR2"/>
<dbReference type="Proteomes" id="UP000006548">
    <property type="component" value="Chromosome 2"/>
</dbReference>
<dbReference type="ExpressionAtlas" id="Q84RR2">
    <property type="expression patterns" value="baseline and differential"/>
</dbReference>
<dbReference type="GO" id="GO:0004842">
    <property type="term" value="F:ubiquitin-protein transferase activity"/>
    <property type="evidence" value="ECO:0007669"/>
    <property type="project" value="InterPro"/>
</dbReference>
<dbReference type="GO" id="GO:0008270">
    <property type="term" value="F:zinc ion binding"/>
    <property type="evidence" value="ECO:0007669"/>
    <property type="project" value="UniProtKB-KW"/>
</dbReference>
<dbReference type="GO" id="GO:0016567">
    <property type="term" value="P:protein ubiquitination"/>
    <property type="evidence" value="ECO:0007669"/>
    <property type="project" value="UniProtKB-UniPathway"/>
</dbReference>
<dbReference type="CDD" id="cd20346">
    <property type="entry name" value="BRcat_RBR_ANKIB1"/>
    <property type="match status" value="1"/>
</dbReference>
<dbReference type="CDD" id="cd22586">
    <property type="entry name" value="Rcat_RBR_ARI1-like"/>
    <property type="match status" value="1"/>
</dbReference>
<dbReference type="CDD" id="cd16773">
    <property type="entry name" value="RING-HC_RBR_TRIAD1"/>
    <property type="match status" value="1"/>
</dbReference>
<dbReference type="FunFam" id="1.20.120.1750:FF:000013">
    <property type="entry name" value="RBR-type E3 ubiquitin transferase"/>
    <property type="match status" value="1"/>
</dbReference>
<dbReference type="FunFam" id="3.30.40.10:FF:000019">
    <property type="entry name" value="RBR-type E3 ubiquitin transferase"/>
    <property type="match status" value="1"/>
</dbReference>
<dbReference type="Gene3D" id="1.20.120.1750">
    <property type="match status" value="1"/>
</dbReference>
<dbReference type="Gene3D" id="3.30.40.10">
    <property type="entry name" value="Zinc/RING finger domain, C3HC4 (zinc finger)"/>
    <property type="match status" value="1"/>
</dbReference>
<dbReference type="InterPro" id="IPR045840">
    <property type="entry name" value="Ariadne"/>
</dbReference>
<dbReference type="InterPro" id="IPR048962">
    <property type="entry name" value="ARIH1-like_UBL"/>
</dbReference>
<dbReference type="InterPro" id="IPR031127">
    <property type="entry name" value="E3_UB_ligase_RBR"/>
</dbReference>
<dbReference type="InterPro" id="IPR002867">
    <property type="entry name" value="IBR_dom"/>
</dbReference>
<dbReference type="InterPro" id="IPR044066">
    <property type="entry name" value="TRIAD_supradom"/>
</dbReference>
<dbReference type="InterPro" id="IPR001841">
    <property type="entry name" value="Znf_RING"/>
</dbReference>
<dbReference type="InterPro" id="IPR013083">
    <property type="entry name" value="Znf_RING/FYVE/PHD"/>
</dbReference>
<dbReference type="PANTHER" id="PTHR11685">
    <property type="entry name" value="RBR FAMILY RING FINGER AND IBR DOMAIN-CONTAINING"/>
    <property type="match status" value="1"/>
</dbReference>
<dbReference type="Pfam" id="PF19422">
    <property type="entry name" value="Ariadne"/>
    <property type="match status" value="1"/>
</dbReference>
<dbReference type="Pfam" id="PF01485">
    <property type="entry name" value="IBR"/>
    <property type="match status" value="1"/>
</dbReference>
<dbReference type="Pfam" id="PF22191">
    <property type="entry name" value="IBR_1"/>
    <property type="match status" value="1"/>
</dbReference>
<dbReference type="Pfam" id="PF21235">
    <property type="entry name" value="UBA_ARI1"/>
    <property type="match status" value="1"/>
</dbReference>
<dbReference type="SMART" id="SM00647">
    <property type="entry name" value="IBR"/>
    <property type="match status" value="2"/>
</dbReference>
<dbReference type="SUPFAM" id="SSF57850">
    <property type="entry name" value="RING/U-box"/>
    <property type="match status" value="3"/>
</dbReference>
<dbReference type="PROSITE" id="PS51873">
    <property type="entry name" value="TRIAD"/>
    <property type="match status" value="1"/>
</dbReference>
<dbReference type="PROSITE" id="PS50089">
    <property type="entry name" value="ZF_RING_2"/>
    <property type="match status" value="1"/>
</dbReference>
<accession>Q84RR2</accession>
<accession>Q8VZE0</accession>
<accession>Q9XII0</accession>
<comment type="function">
    <text evidence="1 4">Might act as an E3 ubiquitin-protein ligase, or as part of E3 complex, which accepts ubiquitin from specific E2 ubiquitin-conjugating enzymes and then transfers it to substrates.</text>
</comment>
<comment type="catalytic activity">
    <reaction evidence="2">
        <text>[E2 ubiquitin-conjugating enzyme]-S-ubiquitinyl-L-cysteine + [acceptor protein]-L-lysine = [E2 ubiquitin-conjugating enzyme]-L-cysteine + [acceptor protein]-N(6)-ubiquitinyl-L-lysine.</text>
        <dbReference type="EC" id="2.3.2.31"/>
    </reaction>
</comment>
<comment type="cofactor">
    <cofactor evidence="6">
        <name>Zn(2+)</name>
        <dbReference type="ChEBI" id="CHEBI:29105"/>
    </cofactor>
    <text evidence="6">Binds 4 Zn(2+) ions per subunit.</text>
</comment>
<comment type="pathway">
    <text>Protein modification; protein ubiquitination.</text>
</comment>
<comment type="tissue specificity">
    <text evidence="5">Ubiquitous.</text>
</comment>
<comment type="domain">
    <text evidence="2">Members of the RBR family are atypical E3 ligases. They interact with the E2 conjugating enzyme UBE2L3 and function like HECT-type E3 enzymes: they bind E2s via the first RING-type zinc finger, but require an obligate trans-thiolation step during the ubiquitin transfer, requiring a conserved active site Cys residue in the second RING-type zinc finger. The active site probably forms a thioester intermediate with ubiquitin taken from the active-site cysteine of the E2 before ultimately transferring it to a Lys residue on the substrate.</text>
</comment>
<comment type="similarity">
    <text evidence="6">Belongs to the RBR family. Ariadne subfamily.</text>
</comment>
<comment type="caution">
    <text evidence="6">Lacks the His residue in the RING-type domain 2 that is one of the conserved features of the family.</text>
</comment>
<comment type="sequence caution" evidence="6">
    <conflict type="erroneous gene model prediction">
        <sequence resource="EMBL-CDS" id="AAD26951"/>
    </conflict>
</comment>
<keyword id="KW-0479">Metal-binding</keyword>
<keyword id="KW-1185">Reference proteome</keyword>
<keyword id="KW-0677">Repeat</keyword>
<keyword id="KW-0808">Transferase</keyword>
<keyword id="KW-0833">Ubl conjugation pathway</keyword>
<keyword id="KW-0862">Zinc</keyword>
<keyword id="KW-0863">Zinc-finger</keyword>